<comment type="function">
    <text evidence="1">Converts the free carboxyl group of a malonyl-thioester to its methyl ester by transfer of a methyl group from S-adenosyl-L-methionine (SAM). It allows to synthesize pimeloyl-ACP via the fatty acid synthetic pathway (By similarity).</text>
</comment>
<comment type="function">
    <text evidence="1">The physiological role of BioH is to remove the methyl group introduced by BioC when the pimeloyl moiety is complete. It allows to synthesize pimeloyl-ACP via the fatty acid synthetic pathway through the hydrolysis of the ester bonds of pimeloyl-ACP esters (By similarity).</text>
</comment>
<comment type="catalytic activity">
    <reaction>
        <text>a carboxylic ester + H2O = an alcohol + a carboxylate + H(+)</text>
        <dbReference type="Rhea" id="RHEA:21164"/>
        <dbReference type="ChEBI" id="CHEBI:15377"/>
        <dbReference type="ChEBI" id="CHEBI:15378"/>
        <dbReference type="ChEBI" id="CHEBI:29067"/>
        <dbReference type="ChEBI" id="CHEBI:30879"/>
        <dbReference type="ChEBI" id="CHEBI:33308"/>
        <dbReference type="EC" id="3.1.1.1"/>
    </reaction>
</comment>
<comment type="catalytic activity">
    <reaction>
        <text>malonyl-[ACP] + S-adenosyl-L-methionine = malonyl-[ACP] methyl ester + S-adenosyl-L-homocysteine</text>
        <dbReference type="Rhea" id="RHEA:17105"/>
        <dbReference type="Rhea" id="RHEA-COMP:9623"/>
        <dbReference type="Rhea" id="RHEA-COMP:9954"/>
        <dbReference type="ChEBI" id="CHEBI:57856"/>
        <dbReference type="ChEBI" id="CHEBI:59789"/>
        <dbReference type="ChEBI" id="CHEBI:78449"/>
        <dbReference type="ChEBI" id="CHEBI:78845"/>
        <dbReference type="EC" id="2.1.1.197"/>
    </reaction>
</comment>
<comment type="pathway">
    <text>Cofactor biosynthesis; biotin biosynthesis.</text>
</comment>
<comment type="similarity">
    <text evidence="3">In the N-terminal section; belongs to the AB hydrolase superfamily. Carboxylesterase BioH family.</text>
</comment>
<comment type="similarity">
    <text evidence="3">In the C-terminal section; belongs to the methyltransferase superfamily.</text>
</comment>
<evidence type="ECO:0000250" key="1"/>
<evidence type="ECO:0000256" key="2">
    <source>
        <dbReference type="SAM" id="MobiDB-lite"/>
    </source>
</evidence>
<evidence type="ECO:0000305" key="3"/>
<name>BIOHC_TERTT</name>
<proteinExistence type="inferred from homology"/>
<dbReference type="EC" id="3.1.1.1"/>
<dbReference type="EC" id="2.1.1.197"/>
<dbReference type="EMBL" id="CP001614">
    <property type="protein sequence ID" value="ACR11632.1"/>
    <property type="molecule type" value="Genomic_DNA"/>
</dbReference>
<dbReference type="RefSeq" id="WP_015817744.1">
    <property type="nucleotide sequence ID" value="NC_012997.1"/>
</dbReference>
<dbReference type="SMR" id="C5BMZ8"/>
<dbReference type="STRING" id="377629.TERTU_0492"/>
<dbReference type="ESTHER" id="tertt-c5bmz8">
    <property type="family name" value="BioH"/>
</dbReference>
<dbReference type="KEGG" id="ttu:TERTU_0492"/>
<dbReference type="eggNOG" id="COG0596">
    <property type="taxonomic scope" value="Bacteria"/>
</dbReference>
<dbReference type="eggNOG" id="COG2021">
    <property type="taxonomic scope" value="Bacteria"/>
</dbReference>
<dbReference type="eggNOG" id="COG2226">
    <property type="taxonomic scope" value="Bacteria"/>
</dbReference>
<dbReference type="HOGENOM" id="CLU_550729_0_0_6"/>
<dbReference type="OrthoDB" id="9760689at2"/>
<dbReference type="UniPathway" id="UPA00078"/>
<dbReference type="Proteomes" id="UP000009080">
    <property type="component" value="Chromosome"/>
</dbReference>
<dbReference type="GO" id="GO:0010340">
    <property type="term" value="F:carboxyl-O-methyltransferase activity"/>
    <property type="evidence" value="ECO:0007669"/>
    <property type="project" value="UniProtKB-UniRule"/>
</dbReference>
<dbReference type="GO" id="GO:0106435">
    <property type="term" value="F:carboxylesterase activity"/>
    <property type="evidence" value="ECO:0007669"/>
    <property type="project" value="UniProtKB-EC"/>
</dbReference>
<dbReference type="GO" id="GO:0102130">
    <property type="term" value="F:malonyl-CoA methyltransferase activity"/>
    <property type="evidence" value="ECO:0007669"/>
    <property type="project" value="UniProtKB-EC"/>
</dbReference>
<dbReference type="GO" id="GO:0008757">
    <property type="term" value="F:S-adenosylmethionine-dependent methyltransferase activity"/>
    <property type="evidence" value="ECO:0007669"/>
    <property type="project" value="InterPro"/>
</dbReference>
<dbReference type="GO" id="GO:0009102">
    <property type="term" value="P:biotin biosynthetic process"/>
    <property type="evidence" value="ECO:0007669"/>
    <property type="project" value="UniProtKB-UniRule"/>
</dbReference>
<dbReference type="GO" id="GO:0032259">
    <property type="term" value="P:methylation"/>
    <property type="evidence" value="ECO:0007669"/>
    <property type="project" value="UniProtKB-KW"/>
</dbReference>
<dbReference type="CDD" id="cd02440">
    <property type="entry name" value="AdoMet_MTases"/>
    <property type="match status" value="1"/>
</dbReference>
<dbReference type="Gene3D" id="3.40.50.1820">
    <property type="entry name" value="alpha/beta hydrolase"/>
    <property type="match status" value="1"/>
</dbReference>
<dbReference type="Gene3D" id="3.40.50.150">
    <property type="entry name" value="Vaccinia Virus protein VP39"/>
    <property type="match status" value="1"/>
</dbReference>
<dbReference type="HAMAP" id="MF_00835">
    <property type="entry name" value="BioC"/>
    <property type="match status" value="1"/>
</dbReference>
<dbReference type="InterPro" id="IPR000073">
    <property type="entry name" value="AB_hydrolase_1"/>
</dbReference>
<dbReference type="InterPro" id="IPR029058">
    <property type="entry name" value="AB_hydrolase_fold"/>
</dbReference>
<dbReference type="InterPro" id="IPR011814">
    <property type="entry name" value="BioC"/>
</dbReference>
<dbReference type="InterPro" id="IPR050228">
    <property type="entry name" value="Carboxylesterase_BioH"/>
</dbReference>
<dbReference type="InterPro" id="IPR013216">
    <property type="entry name" value="Methyltransf_11"/>
</dbReference>
<dbReference type="InterPro" id="IPR029063">
    <property type="entry name" value="SAM-dependent_MTases_sf"/>
</dbReference>
<dbReference type="NCBIfam" id="TIGR02072">
    <property type="entry name" value="BioC"/>
    <property type="match status" value="1"/>
</dbReference>
<dbReference type="PANTHER" id="PTHR43194">
    <property type="entry name" value="HYDROLASE ALPHA/BETA FOLD FAMILY"/>
    <property type="match status" value="1"/>
</dbReference>
<dbReference type="PANTHER" id="PTHR43194:SF5">
    <property type="entry name" value="PIMELOYL-[ACYL-CARRIER PROTEIN] METHYL ESTER ESTERASE"/>
    <property type="match status" value="1"/>
</dbReference>
<dbReference type="Pfam" id="PF00561">
    <property type="entry name" value="Abhydrolase_1"/>
    <property type="match status" value="1"/>
</dbReference>
<dbReference type="Pfam" id="PF08241">
    <property type="entry name" value="Methyltransf_11"/>
    <property type="match status" value="1"/>
</dbReference>
<dbReference type="SUPFAM" id="SSF53474">
    <property type="entry name" value="alpha/beta-Hydrolases"/>
    <property type="match status" value="1"/>
</dbReference>
<dbReference type="SUPFAM" id="SSF53335">
    <property type="entry name" value="S-adenosyl-L-methionine-dependent methyltransferases"/>
    <property type="match status" value="1"/>
</dbReference>
<accession>C5BMZ8</accession>
<sequence length="570" mass="63934">MTEVNVRAAATPEEKPFLNRTRHEPANPQPNRSVLVFLHGWGSDKRQWQSFVPTLLEALGDEREMVFIDLPGFGDNSDFRCDDLEHMLKQLARIIPGNATLIGWSLGGMIATQLASRHPEKIGRLITIATNPLFVKNDAEIAAGKAPWKHAMERETFSDFVNGFADDPEATLKRFIALQSMGDSERRQVTDTLKNLLSFSAHSQQTCWANALSYLDQLDNRTALRNLTQPALHIYGKSDALVPVRAGRALQGLAPSHWVESITAAGHAPHISHPREVATMINSFLRQQAPRLSQRKRRIANSFSSAAQEYDTLARLQKRVVDSLVEFSLGTGGSVGQTLLDLGCGTGYCIERLLQQFPEITQPEGRIHALDIAEGMLDRAQQKFDELGVAEQINWHLGDMESLPFVDESFDGCISSLTVQWSENPLQLFSEMYRALKPGGWFALSTLGPETLFELRSAWRMVDEFAHVNKFLSLESVKSVAEQAGLQMVAYKSETPVLYYHSVVHLMRELKGIGAHTINEGRQNGLMGRATFRRLEEAYDNWLDPDRGLPARYEVYYIYLRKPLDESASA</sequence>
<gene>
    <name type="primary">bioC</name>
    <name type="ordered locus">TERTU_0492</name>
</gene>
<keyword id="KW-0093">Biotin biosynthesis</keyword>
<keyword id="KW-0378">Hydrolase</keyword>
<keyword id="KW-0489">Methyltransferase</keyword>
<keyword id="KW-0511">Multifunctional enzyme</keyword>
<keyword id="KW-1185">Reference proteome</keyword>
<keyword id="KW-0949">S-adenosyl-L-methionine</keyword>
<keyword id="KW-0808">Transferase</keyword>
<reference key="1">
    <citation type="journal article" date="2009" name="PLoS ONE">
        <title>The complete genome of Teredinibacter turnerae T7901: an intracellular endosymbiont of marine wood-boring bivalves (shipworms).</title>
        <authorList>
            <person name="Yang J.C."/>
            <person name="Madupu R."/>
            <person name="Durkin A.S."/>
            <person name="Ekborg N.A."/>
            <person name="Pedamallu C.S."/>
            <person name="Hostetler J.B."/>
            <person name="Radune D."/>
            <person name="Toms B.S."/>
            <person name="Henrissat B."/>
            <person name="Coutinho P.M."/>
            <person name="Schwarz S."/>
            <person name="Field L."/>
            <person name="Trindade-Silva A.E."/>
            <person name="Soares C.A.G."/>
            <person name="Elshahawi S."/>
            <person name="Hanora A."/>
            <person name="Schmidt E.W."/>
            <person name="Haygood M.G."/>
            <person name="Posfai J."/>
            <person name="Benner J."/>
            <person name="Madinger C."/>
            <person name="Nove J."/>
            <person name="Anton B."/>
            <person name="Chaudhary K."/>
            <person name="Foster J."/>
            <person name="Holman A."/>
            <person name="Kumar S."/>
            <person name="Lessard P.A."/>
            <person name="Luyten Y.A."/>
            <person name="Slatko B."/>
            <person name="Wood N."/>
            <person name="Wu B."/>
            <person name="Teplitski M."/>
            <person name="Mougous J.D."/>
            <person name="Ward N."/>
            <person name="Eisen J.A."/>
            <person name="Badger J.H."/>
            <person name="Distel D.L."/>
        </authorList>
    </citation>
    <scope>NUCLEOTIDE SEQUENCE [LARGE SCALE GENOMIC DNA]</scope>
    <source>
        <strain>ATCC 39867 / T7901</strain>
    </source>
</reference>
<protein>
    <recommendedName>
        <fullName>Biotin biosynthesis bifunctional protein BioHC</fullName>
    </recommendedName>
    <domain>
        <recommendedName>
            <fullName>Carboxylesterase BioH</fullName>
            <ecNumber>3.1.1.1</ecNumber>
        </recommendedName>
        <alternativeName>
            <fullName>Biotin synthesis protein BioH</fullName>
        </alternativeName>
    </domain>
    <domain>
        <recommendedName>
            <fullName>Malonyl-[acyl-carrier protein] O-methyltransferase</fullName>
            <shortName>Malonyl-ACP O-methyltransferase</shortName>
            <ecNumber>2.1.1.197</ecNumber>
        </recommendedName>
        <alternativeName>
            <fullName>Biotin synthesis protein BioC</fullName>
        </alternativeName>
    </domain>
</protein>
<organism>
    <name type="scientific">Teredinibacter turnerae (strain ATCC 39867 / T7901)</name>
    <dbReference type="NCBI Taxonomy" id="377629"/>
    <lineage>
        <taxon>Bacteria</taxon>
        <taxon>Pseudomonadati</taxon>
        <taxon>Pseudomonadota</taxon>
        <taxon>Gammaproteobacteria</taxon>
        <taxon>Cellvibrionales</taxon>
        <taxon>Cellvibrionaceae</taxon>
        <taxon>Teredinibacter</taxon>
    </lineage>
</organism>
<feature type="chain" id="PRO_0000413326" description="Biotin biosynthesis bifunctional protein BioHC">
    <location>
        <begin position="1"/>
        <end position="570"/>
    </location>
</feature>
<feature type="region of interest" description="Carboxylesterase">
    <location>
        <begin position="1"/>
        <end position="279"/>
    </location>
</feature>
<feature type="region of interest" description="Disordered" evidence="2">
    <location>
        <begin position="1"/>
        <end position="29"/>
    </location>
</feature>
<feature type="region of interest" description="Malonyl-ACP O-methyltransferase">
    <location>
        <begin position="280"/>
        <end position="570"/>
    </location>
</feature>
<feature type="compositionally biased region" description="Basic and acidic residues" evidence="2">
    <location>
        <begin position="12"/>
        <end position="25"/>
    </location>
</feature>
<feature type="active site" description="Nucleophile" evidence="1">
    <location>
        <position position="105"/>
    </location>
</feature>
<feature type="active site" evidence="1">
    <location>
        <position position="239"/>
    </location>
</feature>
<feature type="active site" evidence="1">
    <location>
        <position position="267"/>
    </location>
</feature>
<feature type="binding site" evidence="1">
    <location>
        <position position="41"/>
    </location>
    <ligand>
        <name>substrate</name>
    </ligand>
</feature>
<feature type="binding site" evidence="1">
    <location>
        <begin position="105"/>
        <end position="106"/>
    </location>
    <ligand>
        <name>substrate</name>
    </ligand>
</feature>
<feature type="binding site" evidence="1">
    <location>
        <begin position="175"/>
        <end position="179"/>
    </location>
    <ligand>
        <name>substrate</name>
    </ligand>
</feature>
<feature type="binding site" evidence="1">
    <location>
        <position position="267"/>
    </location>
    <ligand>
        <name>substrate</name>
    </ligand>
</feature>